<keyword id="KW-0150">Chloroplast</keyword>
<keyword id="KW-0934">Plastid</keyword>
<keyword id="KW-1185">Reference proteome</keyword>
<keyword id="KW-0687">Ribonucleoprotein</keyword>
<keyword id="KW-0689">Ribosomal protein</keyword>
<keyword id="KW-0694">RNA-binding</keyword>
<keyword id="KW-0699">rRNA-binding</keyword>
<proteinExistence type="inferred from homology"/>
<accession>Q2MI77</accession>
<sequence>MTRIKRGYIARRRRTKIRLFASSFRGAHSRLTRTITQQKIRALVSAHRDRDRKKRDFRRLWITRINAVIRERGVSYSYSRLIHDLYKRQLLLNRKILAQIAISNRNCLYMISNEIIKEVDWKESTRII</sequence>
<reference key="1">
    <citation type="journal article" date="2006" name="Theor. Appl. Genet.">
        <title>Complete chloroplast genome sequences of Solanum bulbocastanum, Solanum lycopersicum and comparative analyses with other Solanaceae genomes.</title>
        <authorList>
            <person name="Daniell H."/>
            <person name="Lee S.-B."/>
            <person name="Grevich J."/>
            <person name="Saski C."/>
            <person name="Quesada-Vargas T."/>
            <person name="Guda C."/>
            <person name="Tomkins J."/>
            <person name="Jansen R.K."/>
        </authorList>
    </citation>
    <scope>NUCLEOTIDE SEQUENCE [LARGE SCALE GENOMIC DNA]</scope>
    <source>
        <strain>cv. LA3023</strain>
    </source>
</reference>
<reference key="2">
    <citation type="journal article" date="2006" name="J. Mol. Evol.">
        <title>Sequence of the tomato chloroplast DNA and evolutionary comparison of solanaceous plastid genomes.</title>
        <authorList>
            <person name="Kahlau S."/>
            <person name="Aspinall S."/>
            <person name="Gray J.C."/>
            <person name="Bock R."/>
        </authorList>
    </citation>
    <scope>NUCLEOTIDE SEQUENCE [LARGE SCALE GENOMIC DNA]</scope>
    <source>
        <strain>cv. IPA-6</strain>
    </source>
</reference>
<gene>
    <name evidence="1" type="primary">rpl20</name>
</gene>
<feature type="chain" id="PRO_0000276427" description="Large ribosomal subunit protein bL20c">
    <location>
        <begin position="1"/>
        <end position="128"/>
    </location>
</feature>
<protein>
    <recommendedName>
        <fullName evidence="1">Large ribosomal subunit protein bL20c</fullName>
    </recommendedName>
    <alternativeName>
        <fullName evidence="2">50S ribosomal protein L20, chloroplastic</fullName>
    </alternativeName>
</protein>
<geneLocation type="chloroplast"/>
<name>RK20_SOLLC</name>
<evidence type="ECO:0000255" key="1">
    <source>
        <dbReference type="HAMAP-Rule" id="MF_00382"/>
    </source>
</evidence>
<evidence type="ECO:0000305" key="2"/>
<dbReference type="EMBL" id="DQ347959">
    <property type="protein sequence ID" value="ABC56323.1"/>
    <property type="molecule type" value="Genomic_DNA"/>
</dbReference>
<dbReference type="EMBL" id="AM087200">
    <property type="protein sequence ID" value="CAJ32416.1"/>
    <property type="molecule type" value="Genomic_DNA"/>
</dbReference>
<dbReference type="RefSeq" id="AP_004951.1">
    <property type="nucleotide sequence ID" value="AC_000188.1"/>
</dbReference>
<dbReference type="RefSeq" id="YP_008563111.1">
    <property type="nucleotide sequence ID" value="NC_007898.3"/>
</dbReference>
<dbReference type="SMR" id="Q2MI77"/>
<dbReference type="FunCoup" id="Q2MI77">
    <property type="interactions" value="58"/>
</dbReference>
<dbReference type="STRING" id="4081.Q2MI77"/>
<dbReference type="PaxDb" id="4081-Solyc01g007470.1.1"/>
<dbReference type="GeneID" id="3950476"/>
<dbReference type="KEGG" id="sly:3950476"/>
<dbReference type="eggNOG" id="KOG4707">
    <property type="taxonomic scope" value="Eukaryota"/>
</dbReference>
<dbReference type="HOGENOM" id="CLU_123265_0_1_1"/>
<dbReference type="InParanoid" id="Q2MI77"/>
<dbReference type="OrthoDB" id="10251781at2759"/>
<dbReference type="PhylomeDB" id="Q2MI77"/>
<dbReference type="Proteomes" id="UP000004994">
    <property type="component" value="Chloroplast"/>
</dbReference>
<dbReference type="GO" id="GO:0009507">
    <property type="term" value="C:chloroplast"/>
    <property type="evidence" value="ECO:0007669"/>
    <property type="project" value="UniProtKB-SubCell"/>
</dbReference>
<dbReference type="GO" id="GO:1990904">
    <property type="term" value="C:ribonucleoprotein complex"/>
    <property type="evidence" value="ECO:0007669"/>
    <property type="project" value="UniProtKB-KW"/>
</dbReference>
<dbReference type="GO" id="GO:0005840">
    <property type="term" value="C:ribosome"/>
    <property type="evidence" value="ECO:0007669"/>
    <property type="project" value="UniProtKB-KW"/>
</dbReference>
<dbReference type="GO" id="GO:0019843">
    <property type="term" value="F:rRNA binding"/>
    <property type="evidence" value="ECO:0007669"/>
    <property type="project" value="UniProtKB-UniRule"/>
</dbReference>
<dbReference type="GO" id="GO:0003735">
    <property type="term" value="F:structural constituent of ribosome"/>
    <property type="evidence" value="ECO:0000318"/>
    <property type="project" value="GO_Central"/>
</dbReference>
<dbReference type="GO" id="GO:0000027">
    <property type="term" value="P:ribosomal large subunit assembly"/>
    <property type="evidence" value="ECO:0007669"/>
    <property type="project" value="UniProtKB-UniRule"/>
</dbReference>
<dbReference type="GO" id="GO:0006412">
    <property type="term" value="P:translation"/>
    <property type="evidence" value="ECO:0007669"/>
    <property type="project" value="InterPro"/>
</dbReference>
<dbReference type="CDD" id="cd07026">
    <property type="entry name" value="Ribosomal_L20"/>
    <property type="match status" value="1"/>
</dbReference>
<dbReference type="FunFam" id="1.10.1900.20:FF:000001">
    <property type="entry name" value="50S ribosomal protein L20"/>
    <property type="match status" value="1"/>
</dbReference>
<dbReference type="Gene3D" id="6.10.160.10">
    <property type="match status" value="1"/>
</dbReference>
<dbReference type="Gene3D" id="1.10.1900.20">
    <property type="entry name" value="Ribosomal protein L20"/>
    <property type="match status" value="1"/>
</dbReference>
<dbReference type="HAMAP" id="MF_00382">
    <property type="entry name" value="Ribosomal_bL20"/>
    <property type="match status" value="1"/>
</dbReference>
<dbReference type="InterPro" id="IPR005813">
    <property type="entry name" value="Ribosomal_bL20"/>
</dbReference>
<dbReference type="InterPro" id="IPR049946">
    <property type="entry name" value="RIBOSOMAL_L20_CS"/>
</dbReference>
<dbReference type="InterPro" id="IPR035566">
    <property type="entry name" value="Ribosomal_protein_bL20_C"/>
</dbReference>
<dbReference type="NCBIfam" id="TIGR01032">
    <property type="entry name" value="rplT_bact"/>
    <property type="match status" value="1"/>
</dbReference>
<dbReference type="PANTHER" id="PTHR10986">
    <property type="entry name" value="39S RIBOSOMAL PROTEIN L20"/>
    <property type="match status" value="1"/>
</dbReference>
<dbReference type="Pfam" id="PF00453">
    <property type="entry name" value="Ribosomal_L20"/>
    <property type="match status" value="1"/>
</dbReference>
<dbReference type="PRINTS" id="PR00062">
    <property type="entry name" value="RIBOSOMALL20"/>
</dbReference>
<dbReference type="SUPFAM" id="SSF74731">
    <property type="entry name" value="Ribosomal protein L20"/>
    <property type="match status" value="1"/>
</dbReference>
<dbReference type="PROSITE" id="PS00937">
    <property type="entry name" value="RIBOSOMAL_L20"/>
    <property type="match status" value="1"/>
</dbReference>
<comment type="function">
    <text evidence="1">Binds directly to 23S ribosomal RNA and is necessary for the in vitro assembly process of the 50S ribosomal subunit. It is not involved in the protein synthesizing functions of that subunit.</text>
</comment>
<comment type="subcellular location">
    <subcellularLocation>
        <location>Plastid</location>
        <location>Chloroplast</location>
    </subcellularLocation>
</comment>
<comment type="similarity">
    <text evidence="1">Belongs to the bacterial ribosomal protein bL20 family.</text>
</comment>
<organism>
    <name type="scientific">Solanum lycopersicum</name>
    <name type="common">Tomato</name>
    <name type="synonym">Lycopersicon esculentum</name>
    <dbReference type="NCBI Taxonomy" id="4081"/>
    <lineage>
        <taxon>Eukaryota</taxon>
        <taxon>Viridiplantae</taxon>
        <taxon>Streptophyta</taxon>
        <taxon>Embryophyta</taxon>
        <taxon>Tracheophyta</taxon>
        <taxon>Spermatophyta</taxon>
        <taxon>Magnoliopsida</taxon>
        <taxon>eudicotyledons</taxon>
        <taxon>Gunneridae</taxon>
        <taxon>Pentapetalae</taxon>
        <taxon>asterids</taxon>
        <taxon>lamiids</taxon>
        <taxon>Solanales</taxon>
        <taxon>Solanaceae</taxon>
        <taxon>Solanoideae</taxon>
        <taxon>Solaneae</taxon>
        <taxon>Solanum</taxon>
        <taxon>Solanum subgen. Lycopersicon</taxon>
    </lineage>
</organism>